<accession>B7N156</accession>
<comment type="function">
    <text evidence="1">Rhomboid-type serine protease that catalyzes intramembrane proteolysis.</text>
</comment>
<comment type="catalytic activity">
    <reaction evidence="1">
        <text>Cleaves type-1 transmembrane domains using a catalytic dyad composed of serine and histidine that are contributed by different transmembrane domains.</text>
        <dbReference type="EC" id="3.4.21.105"/>
    </reaction>
</comment>
<comment type="subcellular location">
    <subcellularLocation>
        <location evidence="1">Cell inner membrane</location>
        <topology evidence="1">Multi-pass membrane protein</topology>
    </subcellularLocation>
</comment>
<comment type="similarity">
    <text evidence="1">Belongs to the peptidase S54 family.</text>
</comment>
<evidence type="ECO:0000255" key="1">
    <source>
        <dbReference type="HAMAP-Rule" id="MF_01594"/>
    </source>
</evidence>
<name>GLPG_ECO81</name>
<protein>
    <recommendedName>
        <fullName evidence="1">Rhomboid protease GlpG</fullName>
        <ecNumber evidence="1">3.4.21.105</ecNumber>
    </recommendedName>
    <alternativeName>
        <fullName evidence="1">Intramembrane serine protease</fullName>
    </alternativeName>
</protein>
<proteinExistence type="inferred from homology"/>
<feature type="chain" id="PRO_1000185713" description="Rhomboid protease GlpG">
    <location>
        <begin position="1"/>
        <end position="276"/>
    </location>
</feature>
<feature type="transmembrane region" description="Helical" evidence="1">
    <location>
        <begin position="94"/>
        <end position="114"/>
    </location>
</feature>
<feature type="transmembrane region" description="Helical" evidence="1">
    <location>
        <begin position="142"/>
        <end position="162"/>
    </location>
</feature>
<feature type="transmembrane region" description="Helical" evidence="1">
    <location>
        <begin position="169"/>
        <end position="189"/>
    </location>
</feature>
<feature type="transmembrane region" description="Helical" evidence="1">
    <location>
        <begin position="192"/>
        <end position="212"/>
    </location>
</feature>
<feature type="transmembrane region" description="Helical" evidence="1">
    <location>
        <begin position="229"/>
        <end position="249"/>
    </location>
</feature>
<feature type="transmembrane region" description="Helical" evidence="1">
    <location>
        <begin position="250"/>
        <end position="270"/>
    </location>
</feature>
<feature type="active site" description="Nucleophile" evidence="1">
    <location>
        <position position="201"/>
    </location>
</feature>
<feature type="active site" evidence="1">
    <location>
        <position position="254"/>
    </location>
</feature>
<sequence>MLMITSFANPRVAQAFVDYMATQGVILTIQQHNQSDVWLADESQAERVRAELARFLGNPADPRYLAASWQSGHTDSGLHYRRYPFFAALRERAGPVTWVMMIACVVVFIAMQILGDQEVMLWLAWPFDPTLKFEFWRYFTHALMHFSLMHILFNLLWWWYLGGAVEKRLGSGKLIVITLISALLSGYVQQKFSGPWFGGLSGVVYALMGYVWLRGERDPQSGIYLQRGLIIFALIWIVAGWFDLFGMSMANGAHIAGLAVGLAMAFVDSLNARKRK</sequence>
<dbReference type="EC" id="3.4.21.105" evidence="1"/>
<dbReference type="EMBL" id="CU928162">
    <property type="protein sequence ID" value="CAR10074.1"/>
    <property type="molecule type" value="Genomic_DNA"/>
</dbReference>
<dbReference type="RefSeq" id="WP_000928737.1">
    <property type="nucleotide sequence ID" value="NC_011745.1"/>
</dbReference>
<dbReference type="SMR" id="B7N156"/>
<dbReference type="MEROPS" id="S54.016"/>
<dbReference type="KEGG" id="ecq:ECED1_4084"/>
<dbReference type="HOGENOM" id="CLU_058989_0_0_6"/>
<dbReference type="Proteomes" id="UP000000748">
    <property type="component" value="Chromosome"/>
</dbReference>
<dbReference type="GO" id="GO:0005886">
    <property type="term" value="C:plasma membrane"/>
    <property type="evidence" value="ECO:0007669"/>
    <property type="project" value="UniProtKB-SubCell"/>
</dbReference>
<dbReference type="GO" id="GO:0004252">
    <property type="term" value="F:serine-type endopeptidase activity"/>
    <property type="evidence" value="ECO:0007669"/>
    <property type="project" value="UniProtKB-UniRule"/>
</dbReference>
<dbReference type="GO" id="GO:0006508">
    <property type="term" value="P:proteolysis"/>
    <property type="evidence" value="ECO:0007669"/>
    <property type="project" value="UniProtKB-UniRule"/>
</dbReference>
<dbReference type="FunFam" id="1.20.1540.10:FF:000003">
    <property type="entry name" value="Rhomboid protease GlpG"/>
    <property type="match status" value="1"/>
</dbReference>
<dbReference type="FunFam" id="3.30.70.2350:FF:000001">
    <property type="entry name" value="Rhomboid protease GlpG"/>
    <property type="match status" value="1"/>
</dbReference>
<dbReference type="Gene3D" id="3.30.70.2350">
    <property type="match status" value="1"/>
</dbReference>
<dbReference type="Gene3D" id="1.20.1540.10">
    <property type="entry name" value="Rhomboid-like"/>
    <property type="match status" value="1"/>
</dbReference>
<dbReference type="HAMAP" id="MF_01594">
    <property type="entry name" value="Rhomboid_GlpG"/>
    <property type="match status" value="1"/>
</dbReference>
<dbReference type="InterPro" id="IPR038236">
    <property type="entry name" value="GlpG_N_sf"/>
</dbReference>
<dbReference type="InterPro" id="IPR022732">
    <property type="entry name" value="Peptidase_S54_GlpG_N"/>
</dbReference>
<dbReference type="InterPro" id="IPR022764">
    <property type="entry name" value="Peptidase_S54_rhomboid_dom"/>
</dbReference>
<dbReference type="InterPro" id="IPR035952">
    <property type="entry name" value="Rhomboid-like_sf"/>
</dbReference>
<dbReference type="InterPro" id="IPR023662">
    <property type="entry name" value="Rhomboid_protease_GlpG"/>
</dbReference>
<dbReference type="NCBIfam" id="NF008155">
    <property type="entry name" value="PRK10907.1"/>
    <property type="match status" value="1"/>
</dbReference>
<dbReference type="NCBIfam" id="TIGR04239">
    <property type="entry name" value="rhombo_GlpG"/>
    <property type="match status" value="1"/>
</dbReference>
<dbReference type="PANTHER" id="PTHR43066:SF26">
    <property type="entry name" value="RHOMBOID PROTEASE GLPG"/>
    <property type="match status" value="1"/>
</dbReference>
<dbReference type="PANTHER" id="PTHR43066">
    <property type="entry name" value="RHOMBOID-RELATED PROTEIN"/>
    <property type="match status" value="1"/>
</dbReference>
<dbReference type="Pfam" id="PF01694">
    <property type="entry name" value="Rhomboid"/>
    <property type="match status" value="1"/>
</dbReference>
<dbReference type="Pfam" id="PF12122">
    <property type="entry name" value="Rhomboid_N"/>
    <property type="match status" value="1"/>
</dbReference>
<dbReference type="SUPFAM" id="SSF144091">
    <property type="entry name" value="Rhomboid-like"/>
    <property type="match status" value="1"/>
</dbReference>
<organism>
    <name type="scientific">Escherichia coli O81 (strain ED1a)</name>
    <dbReference type="NCBI Taxonomy" id="585397"/>
    <lineage>
        <taxon>Bacteria</taxon>
        <taxon>Pseudomonadati</taxon>
        <taxon>Pseudomonadota</taxon>
        <taxon>Gammaproteobacteria</taxon>
        <taxon>Enterobacterales</taxon>
        <taxon>Enterobacteriaceae</taxon>
        <taxon>Escherichia</taxon>
    </lineage>
</organism>
<gene>
    <name evidence="1" type="primary">glpG</name>
    <name type="ordered locus">ECED1_4084</name>
</gene>
<keyword id="KW-0997">Cell inner membrane</keyword>
<keyword id="KW-1003">Cell membrane</keyword>
<keyword id="KW-0378">Hydrolase</keyword>
<keyword id="KW-0472">Membrane</keyword>
<keyword id="KW-0645">Protease</keyword>
<keyword id="KW-0720">Serine protease</keyword>
<keyword id="KW-0812">Transmembrane</keyword>
<keyword id="KW-1133">Transmembrane helix</keyword>
<reference key="1">
    <citation type="journal article" date="2009" name="PLoS Genet.">
        <title>Organised genome dynamics in the Escherichia coli species results in highly diverse adaptive paths.</title>
        <authorList>
            <person name="Touchon M."/>
            <person name="Hoede C."/>
            <person name="Tenaillon O."/>
            <person name="Barbe V."/>
            <person name="Baeriswyl S."/>
            <person name="Bidet P."/>
            <person name="Bingen E."/>
            <person name="Bonacorsi S."/>
            <person name="Bouchier C."/>
            <person name="Bouvet O."/>
            <person name="Calteau A."/>
            <person name="Chiapello H."/>
            <person name="Clermont O."/>
            <person name="Cruveiller S."/>
            <person name="Danchin A."/>
            <person name="Diard M."/>
            <person name="Dossat C."/>
            <person name="Karoui M.E."/>
            <person name="Frapy E."/>
            <person name="Garry L."/>
            <person name="Ghigo J.M."/>
            <person name="Gilles A.M."/>
            <person name="Johnson J."/>
            <person name="Le Bouguenec C."/>
            <person name="Lescat M."/>
            <person name="Mangenot S."/>
            <person name="Martinez-Jehanne V."/>
            <person name="Matic I."/>
            <person name="Nassif X."/>
            <person name="Oztas S."/>
            <person name="Petit M.A."/>
            <person name="Pichon C."/>
            <person name="Rouy Z."/>
            <person name="Ruf C.S."/>
            <person name="Schneider D."/>
            <person name="Tourret J."/>
            <person name="Vacherie B."/>
            <person name="Vallenet D."/>
            <person name="Medigue C."/>
            <person name="Rocha E.P.C."/>
            <person name="Denamur E."/>
        </authorList>
    </citation>
    <scope>NUCLEOTIDE SEQUENCE [LARGE SCALE GENOMIC DNA]</scope>
    <source>
        <strain>ED1a</strain>
    </source>
</reference>